<reference key="1">
    <citation type="journal article" date="2010" name="Genome Biol.">
        <title>Structure and dynamics of the pan-genome of Streptococcus pneumoniae and closely related species.</title>
        <authorList>
            <person name="Donati C."/>
            <person name="Hiller N.L."/>
            <person name="Tettelin H."/>
            <person name="Muzzi A."/>
            <person name="Croucher N.J."/>
            <person name="Angiuoli S.V."/>
            <person name="Oggioni M."/>
            <person name="Dunning Hotopp J.C."/>
            <person name="Hu F.Z."/>
            <person name="Riley D.R."/>
            <person name="Covacci A."/>
            <person name="Mitchell T.J."/>
            <person name="Bentley S.D."/>
            <person name="Kilian M."/>
            <person name="Ehrlich G.D."/>
            <person name="Rappuoli R."/>
            <person name="Moxon E.R."/>
            <person name="Masignani V."/>
        </authorList>
    </citation>
    <scope>NUCLEOTIDE SEQUENCE [LARGE SCALE GENOMIC DNA]</scope>
    <source>
        <strain>Hungary19A-6</strain>
    </source>
</reference>
<protein>
    <recommendedName>
        <fullName evidence="1">Ribosomal RNA small subunit methyltransferase A</fullName>
        <ecNumber evidence="1">2.1.1.182</ecNumber>
    </recommendedName>
    <alternativeName>
        <fullName evidence="1">16S rRNA (adenine(1518)-N(6)/adenine(1519)-N(6))-dimethyltransferase</fullName>
    </alternativeName>
    <alternativeName>
        <fullName evidence="1">16S rRNA dimethyladenosine transferase</fullName>
    </alternativeName>
    <alternativeName>
        <fullName evidence="1">16S rRNA dimethylase</fullName>
    </alternativeName>
    <alternativeName>
        <fullName evidence="1">S-adenosylmethionine-6-N', N'-adenosyl(rRNA) dimethyltransferase</fullName>
    </alternativeName>
</protein>
<dbReference type="EC" id="2.1.1.182" evidence="1"/>
<dbReference type="EMBL" id="CP000936">
    <property type="protein sequence ID" value="ACA37478.1"/>
    <property type="molecule type" value="Genomic_DNA"/>
</dbReference>
<dbReference type="RefSeq" id="WP_001216877.1">
    <property type="nucleotide sequence ID" value="NC_010380.1"/>
</dbReference>
<dbReference type="SMR" id="B1I8T7"/>
<dbReference type="KEGG" id="spv:SPH_2126"/>
<dbReference type="HOGENOM" id="CLU_041220_0_0_9"/>
<dbReference type="Proteomes" id="UP000002163">
    <property type="component" value="Chromosome"/>
</dbReference>
<dbReference type="GO" id="GO:0005829">
    <property type="term" value="C:cytosol"/>
    <property type="evidence" value="ECO:0007669"/>
    <property type="project" value="TreeGrafter"/>
</dbReference>
<dbReference type="GO" id="GO:0052908">
    <property type="term" value="F:16S rRNA (adenine(1518)-N(6)/adenine(1519)-N(6))-dimethyltransferase activity"/>
    <property type="evidence" value="ECO:0007669"/>
    <property type="project" value="UniProtKB-EC"/>
</dbReference>
<dbReference type="GO" id="GO:0003723">
    <property type="term" value="F:RNA binding"/>
    <property type="evidence" value="ECO:0007669"/>
    <property type="project" value="UniProtKB-KW"/>
</dbReference>
<dbReference type="CDD" id="cd02440">
    <property type="entry name" value="AdoMet_MTases"/>
    <property type="match status" value="1"/>
</dbReference>
<dbReference type="FunFam" id="1.10.8.100:FF:000005">
    <property type="entry name" value="Ribosomal RNA small subunit methyltransferase A"/>
    <property type="match status" value="1"/>
</dbReference>
<dbReference type="FunFam" id="3.40.50.150:FF:000023">
    <property type="entry name" value="Ribosomal RNA small subunit methyltransferase A"/>
    <property type="match status" value="1"/>
</dbReference>
<dbReference type="Gene3D" id="1.10.8.100">
    <property type="entry name" value="Ribosomal RNA adenine dimethylase-like, domain 2"/>
    <property type="match status" value="1"/>
</dbReference>
<dbReference type="Gene3D" id="3.40.50.150">
    <property type="entry name" value="Vaccinia Virus protein VP39"/>
    <property type="match status" value="1"/>
</dbReference>
<dbReference type="HAMAP" id="MF_00607">
    <property type="entry name" value="16SrRNA_methyltr_A"/>
    <property type="match status" value="1"/>
</dbReference>
<dbReference type="InterPro" id="IPR001737">
    <property type="entry name" value="KsgA/Erm"/>
</dbReference>
<dbReference type="InterPro" id="IPR023165">
    <property type="entry name" value="rRNA_Ade_diMease-like_C"/>
</dbReference>
<dbReference type="InterPro" id="IPR020596">
    <property type="entry name" value="rRNA_Ade_Mease_Trfase_CS"/>
</dbReference>
<dbReference type="InterPro" id="IPR020598">
    <property type="entry name" value="rRNA_Ade_methylase_Trfase_N"/>
</dbReference>
<dbReference type="InterPro" id="IPR011530">
    <property type="entry name" value="rRNA_adenine_dimethylase"/>
</dbReference>
<dbReference type="InterPro" id="IPR029063">
    <property type="entry name" value="SAM-dependent_MTases_sf"/>
</dbReference>
<dbReference type="NCBIfam" id="TIGR00755">
    <property type="entry name" value="ksgA"/>
    <property type="match status" value="1"/>
</dbReference>
<dbReference type="PANTHER" id="PTHR11727">
    <property type="entry name" value="DIMETHYLADENOSINE TRANSFERASE"/>
    <property type="match status" value="1"/>
</dbReference>
<dbReference type="PANTHER" id="PTHR11727:SF7">
    <property type="entry name" value="DIMETHYLADENOSINE TRANSFERASE-RELATED"/>
    <property type="match status" value="1"/>
</dbReference>
<dbReference type="Pfam" id="PF00398">
    <property type="entry name" value="RrnaAD"/>
    <property type="match status" value="1"/>
</dbReference>
<dbReference type="SMART" id="SM00650">
    <property type="entry name" value="rADc"/>
    <property type="match status" value="1"/>
</dbReference>
<dbReference type="SUPFAM" id="SSF53335">
    <property type="entry name" value="S-adenosyl-L-methionine-dependent methyltransferases"/>
    <property type="match status" value="1"/>
</dbReference>
<dbReference type="PROSITE" id="PS01131">
    <property type="entry name" value="RRNA_A_DIMETH"/>
    <property type="match status" value="1"/>
</dbReference>
<dbReference type="PROSITE" id="PS51689">
    <property type="entry name" value="SAM_RNA_A_N6_MT"/>
    <property type="match status" value="1"/>
</dbReference>
<name>RSMA_STRPI</name>
<sequence>MRIADYSVTKAVLERHGFTFKKSFGQNFLTDTNILQKIVDTAEIDDQVNVIEIGPGIGALTEFLAERAAQVMAFEIDHRLVPILVDTLRDFDNVTVVNEDILKVDLAQHIQNFKNPNLPIKVVANLPYYITTPILMHLIESGIPFCEFVVMMQKEVADRISAQPNTKAYGSLSIAVQYYMTAKVAFIVPRTVFVPAPNVDSAILKMVRRPEPAVAVEDENFFFKVSKASFTHRRKTLWNNLTGYFGKTEEVKDKLTKALDQAGLSPSVRGEALSLAEFAGLADALKGQGL</sequence>
<comment type="function">
    <text evidence="1">Specifically dimethylates two adjacent adenosines (A1518 and A1519) in the loop of a conserved hairpin near the 3'-end of 16S rRNA in the 30S particle. May play a critical role in biogenesis of 30S subunits.</text>
</comment>
<comment type="catalytic activity">
    <reaction evidence="1">
        <text>adenosine(1518)/adenosine(1519) in 16S rRNA + 4 S-adenosyl-L-methionine = N(6)-dimethyladenosine(1518)/N(6)-dimethyladenosine(1519) in 16S rRNA + 4 S-adenosyl-L-homocysteine + 4 H(+)</text>
        <dbReference type="Rhea" id="RHEA:19609"/>
        <dbReference type="Rhea" id="RHEA-COMP:10232"/>
        <dbReference type="Rhea" id="RHEA-COMP:10233"/>
        <dbReference type="ChEBI" id="CHEBI:15378"/>
        <dbReference type="ChEBI" id="CHEBI:57856"/>
        <dbReference type="ChEBI" id="CHEBI:59789"/>
        <dbReference type="ChEBI" id="CHEBI:74411"/>
        <dbReference type="ChEBI" id="CHEBI:74493"/>
        <dbReference type="EC" id="2.1.1.182"/>
    </reaction>
</comment>
<comment type="subcellular location">
    <subcellularLocation>
        <location evidence="1">Cytoplasm</location>
    </subcellularLocation>
</comment>
<comment type="similarity">
    <text evidence="1">Belongs to the class I-like SAM-binding methyltransferase superfamily. rRNA adenine N(6)-methyltransferase family. RsmA subfamily.</text>
</comment>
<organism>
    <name type="scientific">Streptococcus pneumoniae (strain Hungary19A-6)</name>
    <dbReference type="NCBI Taxonomy" id="487214"/>
    <lineage>
        <taxon>Bacteria</taxon>
        <taxon>Bacillati</taxon>
        <taxon>Bacillota</taxon>
        <taxon>Bacilli</taxon>
        <taxon>Lactobacillales</taxon>
        <taxon>Streptococcaceae</taxon>
        <taxon>Streptococcus</taxon>
    </lineage>
</organism>
<accession>B1I8T7</accession>
<gene>
    <name evidence="1" type="primary">rsmA</name>
    <name evidence="1" type="synonym">ksgA</name>
    <name type="ordered locus">SPH_2126</name>
</gene>
<proteinExistence type="inferred from homology"/>
<feature type="chain" id="PRO_1000130327" description="Ribosomal RNA small subunit methyltransferase A">
    <location>
        <begin position="1"/>
        <end position="290"/>
    </location>
</feature>
<feature type="binding site" evidence="1">
    <location>
        <position position="27"/>
    </location>
    <ligand>
        <name>S-adenosyl-L-methionine</name>
        <dbReference type="ChEBI" id="CHEBI:59789"/>
    </ligand>
</feature>
<feature type="binding site" evidence="1">
    <location>
        <position position="29"/>
    </location>
    <ligand>
        <name>S-adenosyl-L-methionine</name>
        <dbReference type="ChEBI" id="CHEBI:59789"/>
    </ligand>
</feature>
<feature type="binding site" evidence="1">
    <location>
        <position position="54"/>
    </location>
    <ligand>
        <name>S-adenosyl-L-methionine</name>
        <dbReference type="ChEBI" id="CHEBI:59789"/>
    </ligand>
</feature>
<feature type="binding site" evidence="1">
    <location>
        <position position="75"/>
    </location>
    <ligand>
        <name>S-adenosyl-L-methionine</name>
        <dbReference type="ChEBI" id="CHEBI:59789"/>
    </ligand>
</feature>
<feature type="binding site" evidence="1">
    <location>
        <position position="100"/>
    </location>
    <ligand>
        <name>S-adenosyl-L-methionine</name>
        <dbReference type="ChEBI" id="CHEBI:59789"/>
    </ligand>
</feature>
<feature type="binding site" evidence="1">
    <location>
        <position position="125"/>
    </location>
    <ligand>
        <name>S-adenosyl-L-methionine</name>
        <dbReference type="ChEBI" id="CHEBI:59789"/>
    </ligand>
</feature>
<keyword id="KW-0963">Cytoplasm</keyword>
<keyword id="KW-0489">Methyltransferase</keyword>
<keyword id="KW-0694">RNA-binding</keyword>
<keyword id="KW-0698">rRNA processing</keyword>
<keyword id="KW-0949">S-adenosyl-L-methionine</keyword>
<keyword id="KW-0808">Transferase</keyword>
<evidence type="ECO:0000255" key="1">
    <source>
        <dbReference type="HAMAP-Rule" id="MF_00607"/>
    </source>
</evidence>